<comment type="function">
    <text evidence="1">Global transcriptional regulator of carbon catabolite repression (CCR) and carbon catabolite activation (CCA), which ensures optimal energy usage under diverse conditions.</text>
</comment>
<organism>
    <name type="scientific">Staphylococcus xylosus</name>
    <dbReference type="NCBI Taxonomy" id="1288"/>
    <lineage>
        <taxon>Bacteria</taxon>
        <taxon>Bacillati</taxon>
        <taxon>Bacillota</taxon>
        <taxon>Bacilli</taxon>
        <taxon>Bacillales</taxon>
        <taxon>Staphylococcaceae</taxon>
        <taxon>Staphylococcus</taxon>
    </lineage>
</organism>
<gene>
    <name type="primary">ccpA</name>
</gene>
<proteinExistence type="inferred from homology"/>
<keyword id="KW-0010">Activator</keyword>
<keyword id="KW-0238">DNA-binding</keyword>
<keyword id="KW-0678">Repressor</keyword>
<keyword id="KW-0804">Transcription</keyword>
<keyword id="KW-0805">Transcription regulation</keyword>
<dbReference type="EMBL" id="X95439">
    <property type="protein sequence ID" value="CAA64713.1"/>
    <property type="molecule type" value="Genomic_DNA"/>
</dbReference>
<dbReference type="RefSeq" id="WP_029377027.1">
    <property type="nucleotide sequence ID" value="NZ_VBTJ01000001.1"/>
</dbReference>
<dbReference type="SMR" id="Q56194"/>
<dbReference type="STRING" id="1288.AWC37_06515"/>
<dbReference type="GeneID" id="45496739"/>
<dbReference type="eggNOG" id="COG1609">
    <property type="taxonomic scope" value="Bacteria"/>
</dbReference>
<dbReference type="OrthoDB" id="9784962at2"/>
<dbReference type="GO" id="GO:0003700">
    <property type="term" value="F:DNA-binding transcription factor activity"/>
    <property type="evidence" value="ECO:0007669"/>
    <property type="project" value="TreeGrafter"/>
</dbReference>
<dbReference type="GO" id="GO:0000976">
    <property type="term" value="F:transcription cis-regulatory region binding"/>
    <property type="evidence" value="ECO:0007669"/>
    <property type="project" value="TreeGrafter"/>
</dbReference>
<dbReference type="CDD" id="cd01392">
    <property type="entry name" value="HTH_LacI"/>
    <property type="match status" value="1"/>
</dbReference>
<dbReference type="FunFam" id="1.10.260.40:FF:000002">
    <property type="entry name" value="HTH-type transcriptional repressor PurR"/>
    <property type="match status" value="1"/>
</dbReference>
<dbReference type="Gene3D" id="3.40.50.2300">
    <property type="match status" value="2"/>
</dbReference>
<dbReference type="Gene3D" id="1.10.260.40">
    <property type="entry name" value="lambda repressor-like DNA-binding domains"/>
    <property type="match status" value="1"/>
</dbReference>
<dbReference type="InterPro" id="IPR006377">
    <property type="entry name" value="CcpA"/>
</dbReference>
<dbReference type="InterPro" id="IPR000843">
    <property type="entry name" value="HTH_LacI"/>
</dbReference>
<dbReference type="InterPro" id="IPR046335">
    <property type="entry name" value="LacI/GalR-like_sensor"/>
</dbReference>
<dbReference type="InterPro" id="IPR010982">
    <property type="entry name" value="Lambda_DNA-bd_dom_sf"/>
</dbReference>
<dbReference type="InterPro" id="IPR028082">
    <property type="entry name" value="Peripla_BP_I"/>
</dbReference>
<dbReference type="NCBIfam" id="TIGR01481">
    <property type="entry name" value="ccpA"/>
    <property type="match status" value="1"/>
</dbReference>
<dbReference type="PANTHER" id="PTHR30146:SF150">
    <property type="entry name" value="ARABINOSE METABOLISM TRANSCRIPTIONAL REPRESSOR"/>
    <property type="match status" value="1"/>
</dbReference>
<dbReference type="PANTHER" id="PTHR30146">
    <property type="entry name" value="LACI-RELATED TRANSCRIPTIONAL REPRESSOR"/>
    <property type="match status" value="1"/>
</dbReference>
<dbReference type="Pfam" id="PF00356">
    <property type="entry name" value="LacI"/>
    <property type="match status" value="1"/>
</dbReference>
<dbReference type="Pfam" id="PF13377">
    <property type="entry name" value="Peripla_BP_3"/>
    <property type="match status" value="1"/>
</dbReference>
<dbReference type="PRINTS" id="PR00036">
    <property type="entry name" value="HTHLACI"/>
</dbReference>
<dbReference type="SMART" id="SM00354">
    <property type="entry name" value="HTH_LACI"/>
    <property type="match status" value="1"/>
</dbReference>
<dbReference type="SUPFAM" id="SSF47413">
    <property type="entry name" value="lambda repressor-like DNA-binding domains"/>
    <property type="match status" value="1"/>
</dbReference>
<dbReference type="SUPFAM" id="SSF53822">
    <property type="entry name" value="Periplasmic binding protein-like I"/>
    <property type="match status" value="1"/>
</dbReference>
<dbReference type="PROSITE" id="PS00356">
    <property type="entry name" value="HTH_LACI_1"/>
    <property type="match status" value="1"/>
</dbReference>
<dbReference type="PROSITE" id="PS50932">
    <property type="entry name" value="HTH_LACI_2"/>
    <property type="match status" value="1"/>
</dbReference>
<sequence>MTVTIYDVAREARVSMATVSRVVNGNQNVKPETRDKVNEVIKKLNYRPNAVARGLASKRTTTVGVIIPDISNVYYSQLARGLEDIATMYKYHSIISNSDNDPSKEKEIFNNLLSKQVDGIIFLGGTISEEIKDLINKSSVPVVVSGTNGKDEGISSVNIDFESAAKEITEHLIEKGAKSFAFVGGDYSKKAQEDVLVGLKDVLVQHELELDEQLIFNGNETYKDGLRAFESLATAKPDAILSISDEQAIGLVHAAQDAGVNVPNDLQIVSFNNTRLVEMVRPQLSSVIQPLYDIGAVGMRLLTKYMNEEDIDEPNVILPHRIEYRGTTK</sequence>
<reference key="1">
    <citation type="journal article" date="1996" name="Mol. Microbiol.">
        <title>Catabolite repression mediated by the catabolite control protein CcpA in Staphylococcus xylosus.</title>
        <authorList>
            <person name="Egeter O."/>
            <person name="Brueckner R."/>
        </authorList>
    </citation>
    <scope>NUCLEOTIDE SEQUENCE [GENOMIC DNA]</scope>
    <source>
        <strain>DSM 20267 / Isolate C2A</strain>
    </source>
</reference>
<protein>
    <recommendedName>
        <fullName>Catabolite control protein A</fullName>
    </recommendedName>
</protein>
<accession>Q56194</accession>
<evidence type="ECO:0000250" key="1"/>
<evidence type="ECO:0000255" key="2">
    <source>
        <dbReference type="PROSITE-ProRule" id="PRU00111"/>
    </source>
</evidence>
<feature type="chain" id="PRO_0000107934" description="Catabolite control protein A">
    <location>
        <begin position="1"/>
        <end position="329"/>
    </location>
</feature>
<feature type="domain" description="HTH lacI-type" evidence="2">
    <location>
        <begin position="1"/>
        <end position="57"/>
    </location>
</feature>
<feature type="DNA-binding region" description="H-T-H motif" evidence="2">
    <location>
        <begin position="5"/>
        <end position="24"/>
    </location>
</feature>
<name>CCPA_STAXY</name>